<keyword id="KW-0053">Apoptosis</keyword>
<keyword id="KW-0175">Coiled coil</keyword>
<keyword id="KW-1015">Disulfide bond</keyword>
<keyword id="KW-0342">GTP-binding</keyword>
<keyword id="KW-0378">Hydrolase</keyword>
<keyword id="KW-0446">Lipid-binding</keyword>
<keyword id="KW-0460">Magnesium</keyword>
<keyword id="KW-0472">Membrane</keyword>
<keyword id="KW-0479">Metal-binding</keyword>
<keyword id="KW-0496">Mitochondrion</keyword>
<keyword id="KW-0999">Mitochondrion inner membrane</keyword>
<keyword id="KW-0547">Nucleotide-binding</keyword>
<keyword id="KW-1185">Reference proteome</keyword>
<keyword id="KW-0809">Transit peptide</keyword>
<keyword id="KW-0812">Transmembrane</keyword>
<keyword id="KW-1133">Transmembrane helix</keyword>
<name>OPA1_DANRE</name>
<comment type="function">
    <text evidence="2 3">Dynamin-related GTPase that is essential for normal mitochondrial morphology by mediating fusion of the mitochondrial inner membranes, regulating cristae morphology and maintaining respiratory chain function. Exists in two forms: the transmembrane, long form (Dynamin-like GTPase OPA1, long form; L-OPA1), which is tethered to the inner mitochondrial membrane, and the short soluble form (Dynamin-like GTPase OPA1, short form; S-OPA1), which results from proteolytic cleavage and localizes in the intermembrane space. Both forms (L-OPA1 and S-OPA1) cooperate to catalyze the fusion of the mitochondrial inner membrane. The equilibrium between L-OPA1 and S-OPA1 is essential: excess levels of S-OPA1, produced by cleavage by OMA1 following loss of mitochondrial membrane potential, lead to an impaired equilibrium between L-OPA1 and S-OPA1, inhibiting mitochondrial fusion (By similarity). The balance between L-OPA1 and S-OPA1 also influences cristae shape and morphology (By similarity). Its role in mitochondrial morphology is required for mitochondrial genome maintenance (By similarity).</text>
</comment>
<comment type="function">
    <molecule>Dynamin-like GTPase OPA1, long form</molecule>
    <text evidence="1 2">Constitutes the transmembrane long form (L-OPA1) that plays a central role in mitochondrial inner membrane fusion and cristae morphology. L-OPA1 and the soluble short form (S-OPA1) form higher-order helical assemblies that coordinate the fusion of mitochondrial inner membranes. Inner membrane-anchored L-OPA1 molecules initiate membrane remodeling by recruiting soluble S-OPA1 to rapidly polymerize into a flexible cylindrical scaffold encaging the mitochondrial inner membrane. Once at the membrane surface, the formation of S-OPA1 helices induce bilayer curvature. OPA1 dimerization through the paddle region, which inserts into cardiolipin-containing membrane, promotes GTP hydrolysis and the helical assembly of a flexible OPA1 lattice on the membrane, which drives membrane curvature and mitochondrial fusion. Plays a role in the maintenance and remodeling of mitochondrial cristae, some invaginations of the mitochondrial inner membrane that provide an increase in the surface area (By similarity). Probably acts by forming helical filaments at the inside of inner membrane tubes with the shape and dimensions of crista junctions (By similarity).</text>
</comment>
<comment type="function">
    <molecule>Dynamin-like GTPase OPA1, short form</molecule>
    <text evidence="1 2">Constitutes the soluble short form (S-OPA1) generated by cleavage by OMA1, which plays a central role in mitochondrial inner membrane fusion and cristae morphology. The transmembrane long form (L-OPA1) and the S-OPA1 form higher-order helical assemblies that coordinate the fusion of mitochondrial inner membranes. Inner membrane-anchored L-OPA1 molecules initiate membrane remodeling by recruiting soluble S-OPA1 to rapidly polymerize into a flexible cylindrical scaffold encaging the mitochondrial inner membrane. Once at the membrane surface, the formation of S-OPA1 helices induce bilayer curvature. OPA1 dimerization through the paddle region, which inserts into cardiolipin-containing membrane, promotes GTP hydrolysis and the helical assembly of a flexible OPA1 lattice on the membrane, which drives membrane curvature and mitochondrial fusion. Excess levels of S-OPA1 produced by cleavage by OMA1 following stress conditions that induce loss of mitochondrial membrane potential, lead to an impaired equilibrium between L-OPA1 and S-OPA1, thereby inhibiting mitochondrial fusion. Plays a role in the maintenance and remodeling of mitochondrial cristae, some invaginations of the mitochondrial inner membrane that provide an increase in the surface area (By similarity). Probably acts by forming helical filaments at the inside of inner membrane tubes with the shape and dimensions of crista junctions (By similarity).</text>
</comment>
<comment type="catalytic activity">
    <reaction evidence="2">
        <text>GTP + H2O = GDP + phosphate + H(+)</text>
        <dbReference type="Rhea" id="RHEA:19669"/>
        <dbReference type="ChEBI" id="CHEBI:15377"/>
        <dbReference type="ChEBI" id="CHEBI:15378"/>
        <dbReference type="ChEBI" id="CHEBI:37565"/>
        <dbReference type="ChEBI" id="CHEBI:43474"/>
        <dbReference type="ChEBI" id="CHEBI:58189"/>
        <dbReference type="EC" id="3.6.5.5"/>
    </reaction>
</comment>
<comment type="subunit">
    <text evidence="2">Oligomeric complex consisting of membrane-bound and soluble forms of OPA1.</text>
</comment>
<comment type="subcellular location">
    <molecule>Dynamin-like GTPase OPA1, long form</molecule>
    <subcellularLocation>
        <location evidence="2">Mitochondrion inner membrane</location>
        <topology evidence="5">Single-pass membrane protein</topology>
    </subcellularLocation>
    <text evidence="2">Detected at contact sites between endoplasmic reticulum and mitochondrion membranes.</text>
</comment>
<comment type="subcellular location">
    <molecule>Dynamin-like GTPase OPA1, short form</molecule>
    <subcellularLocation>
        <location evidence="2">Mitochondrion intermembrane space</location>
    </subcellularLocation>
</comment>
<comment type="domain">
    <text evidence="2">The paddle region plays a major role in driving mitochondrial inner membrane fusion. It binds lipid membranes enriched in negatively charged phospholipids, such as cardiolipin, and promotes membrane tubulation. A conserved intramembrane region, named membrane insertion loop (MIL), within the paddle region inserts deeply into the bilayer, further stabilizing the interactions with cardiolipin-enriched membranes. OPA1 dimerization through the paddle domain promotes the helical assembly of a flexible OPA1 lattice on the membrane, driving mitochondrial fusion in cells.</text>
</comment>
<comment type="PTM">
    <text evidence="2">Cleaved by OMA1 or YME1L downstream of the transmembrane region in response to different signals to generate soluble forms. Cleaved by OMA1 at position S1 following stress conditions, generating the short soluble form (Dynamin-like GTPase OPA1, short form; S-OPA1).</text>
</comment>
<comment type="disruption phenotype">
    <text evidence="8">Morpholino knockdown of the protein results in disrupted mitochondrial morphology, leading to bioenergetic defects (PubMed:23516612). Embryos show abnormal blood circulation and heart defects, as well as small eyes and small pectoral fin buds (PubMed:23516612). Moreover, startle response is reduced and locomotor activity is impaired (PubMed:23516612).</text>
</comment>
<comment type="similarity">
    <text evidence="6">Belongs to the TRAFAC class dynamin-like GTPase superfamily. Dynamin/Fzo/YdjA family.</text>
</comment>
<evidence type="ECO:0000250" key="1">
    <source>
        <dbReference type="UniProtKB" id="G0SGC7"/>
    </source>
</evidence>
<evidence type="ECO:0000250" key="2">
    <source>
        <dbReference type="UniProtKB" id="O60313"/>
    </source>
</evidence>
<evidence type="ECO:0000250" key="3">
    <source>
        <dbReference type="UniProtKB" id="P58281"/>
    </source>
</evidence>
<evidence type="ECO:0000250" key="4">
    <source>
        <dbReference type="UniProtKB" id="Q2TA68"/>
    </source>
</evidence>
<evidence type="ECO:0000255" key="5"/>
<evidence type="ECO:0000255" key="6">
    <source>
        <dbReference type="PROSITE-ProRule" id="PRU01055"/>
    </source>
</evidence>
<evidence type="ECO:0000256" key="7">
    <source>
        <dbReference type="SAM" id="MobiDB-lite"/>
    </source>
</evidence>
<evidence type="ECO:0000269" key="8">
    <source>
    </source>
</evidence>
<evidence type="ECO:0000305" key="9"/>
<evidence type="ECO:0000312" key="10">
    <source>
        <dbReference type="EMBL" id="AAH85633.1"/>
    </source>
</evidence>
<feature type="transit peptide" description="Mitochondrion" evidence="4">
    <location>
        <begin position="1"/>
        <end position="86"/>
    </location>
</feature>
<feature type="chain" id="PRO_0000257997" description="Dynamin-like GTPase OPA1, long form">
    <location>
        <begin position="87"/>
        <end position="966"/>
    </location>
</feature>
<feature type="chain" id="PRO_0000417514" description="Dynamin-like GTPase OPA1, short form" evidence="4">
    <location>
        <begin position="194"/>
        <end position="966"/>
    </location>
</feature>
<feature type="topological domain" description="Mitochondrial matrix" evidence="2">
    <location>
        <begin position="87"/>
        <end position="95"/>
    </location>
</feature>
<feature type="transmembrane region" description="Helical" evidence="5">
    <location>
        <begin position="96"/>
        <end position="112"/>
    </location>
</feature>
<feature type="topological domain" description="Mitochondrial intermembrane" evidence="2">
    <location>
        <begin position="113"/>
        <end position="776"/>
    </location>
</feature>
<feature type="intramembrane region" evidence="2">
    <location>
        <begin position="777"/>
        <end position="787"/>
    </location>
</feature>
<feature type="topological domain" description="Mitochondrial intermembrane" evidence="2">
    <location>
        <begin position="788"/>
        <end position="966"/>
    </location>
</feature>
<feature type="domain" description="Dynamin-type G" evidence="6">
    <location>
        <begin position="291"/>
        <end position="567"/>
    </location>
</feature>
<feature type="region of interest" description="Disordered" evidence="7">
    <location>
        <begin position="189"/>
        <end position="217"/>
    </location>
</feature>
<feature type="region of interest" description="G1 motif" evidence="6">
    <location>
        <begin position="301"/>
        <end position="308"/>
    </location>
</feature>
<feature type="region of interest" description="G2 motif" evidence="6">
    <location>
        <begin position="327"/>
        <end position="330"/>
    </location>
</feature>
<feature type="region of interest" description="G3 motif" evidence="6">
    <location>
        <begin position="404"/>
        <end position="407"/>
    </location>
</feature>
<feature type="region of interest" description="G4 motif" evidence="6">
    <location>
        <begin position="473"/>
        <end position="476"/>
    </location>
</feature>
<feature type="region of interest" description="G5 motif" evidence="6">
    <location>
        <begin position="507"/>
        <end position="510"/>
    </location>
</feature>
<feature type="region of interest" description="Stalk region" evidence="2">
    <location>
        <begin position="595"/>
        <end position="842"/>
    </location>
</feature>
<feature type="region of interest" description="Paddle region" evidence="2">
    <location>
        <begin position="742"/>
        <end position="862"/>
    </location>
</feature>
<feature type="region of interest" description="Stalk region" evidence="2">
    <location>
        <begin position="880"/>
        <end position="934"/>
    </location>
</feature>
<feature type="coiled-coil region" evidence="5">
    <location>
        <begin position="213"/>
        <end position="259"/>
    </location>
</feature>
<feature type="coiled-coil region" evidence="5">
    <location>
        <begin position="901"/>
        <end position="966"/>
    </location>
</feature>
<feature type="compositionally biased region" description="Basic and acidic residues" evidence="7">
    <location>
        <begin position="207"/>
        <end position="217"/>
    </location>
</feature>
<feature type="binding site" evidence="2">
    <location>
        <position position="304"/>
    </location>
    <ligand>
        <name>GTP</name>
        <dbReference type="ChEBI" id="CHEBI:37565"/>
    </ligand>
</feature>
<feature type="binding site" evidence="2">
    <location>
        <position position="306"/>
    </location>
    <ligand>
        <name>GTP</name>
        <dbReference type="ChEBI" id="CHEBI:37565"/>
    </ligand>
</feature>
<feature type="binding site" evidence="2">
    <location>
        <position position="307"/>
    </location>
    <ligand>
        <name>GTP</name>
        <dbReference type="ChEBI" id="CHEBI:37565"/>
    </ligand>
</feature>
<feature type="binding site" evidence="2">
    <location>
        <position position="308"/>
    </location>
    <ligand>
        <name>GTP</name>
        <dbReference type="ChEBI" id="CHEBI:37565"/>
    </ligand>
</feature>
<feature type="binding site" evidence="2">
    <location>
        <position position="308"/>
    </location>
    <ligand>
        <name>Mg(2+)</name>
        <dbReference type="ChEBI" id="CHEBI:18420"/>
    </ligand>
</feature>
<feature type="binding site" evidence="2">
    <location>
        <position position="309"/>
    </location>
    <ligand>
        <name>GTP</name>
        <dbReference type="ChEBI" id="CHEBI:37565"/>
    </ligand>
</feature>
<feature type="binding site" evidence="2">
    <location>
        <position position="323"/>
    </location>
    <ligand>
        <name>GTP</name>
        <dbReference type="ChEBI" id="CHEBI:37565"/>
    </ligand>
</feature>
<feature type="binding site" evidence="2">
    <location>
        <position position="329"/>
    </location>
    <ligand>
        <name>Mg(2+)</name>
        <dbReference type="ChEBI" id="CHEBI:18420"/>
    </ligand>
</feature>
<feature type="binding site" evidence="2">
    <location>
        <position position="404"/>
    </location>
    <ligand>
        <name>Mg(2+)</name>
        <dbReference type="ChEBI" id="CHEBI:18420"/>
    </ligand>
</feature>
<feature type="binding site" evidence="2">
    <location>
        <position position="474"/>
    </location>
    <ligand>
        <name>GTP</name>
        <dbReference type="ChEBI" id="CHEBI:37565"/>
    </ligand>
</feature>
<feature type="binding site" evidence="2">
    <location>
        <position position="476"/>
    </location>
    <ligand>
        <name>GTP</name>
        <dbReference type="ChEBI" id="CHEBI:37565"/>
    </ligand>
</feature>
<feature type="binding site" evidence="2">
    <location>
        <position position="509"/>
    </location>
    <ligand>
        <name>GTP</name>
        <dbReference type="ChEBI" id="CHEBI:37565"/>
    </ligand>
</feature>
<feature type="site" description="Cleavage at site S1" evidence="4">
    <location>
        <begin position="193"/>
        <end position="194"/>
    </location>
</feature>
<feature type="disulfide bond" evidence="2">
    <location>
        <begin position="862"/>
        <end position="880"/>
    </location>
</feature>
<reference evidence="10" key="1">
    <citation type="submission" date="2004-11" db="EMBL/GenBank/DDBJ databases">
        <authorList>
            <consortium name="NIH - Zebrafish Gene Collection (ZGC) project"/>
        </authorList>
    </citation>
    <scope>NUCLEOTIDE SEQUENCE [LARGE SCALE MRNA]</scope>
</reference>
<reference key="2">
    <citation type="journal article" date="2013" name="PLoS ONE">
        <title>Opa1 is required for proper mitochondrial metabolism in early development.</title>
        <authorList>
            <person name="Rahn J.J."/>
            <person name="Stackley K.D."/>
            <person name="Chan S.S."/>
        </authorList>
    </citation>
    <scope>DISRUPTION PHENOTYPE</scope>
</reference>
<proteinExistence type="evidence at transcript level"/>
<sequence>MLRAGSVVTCIACKGLLPSRMGVKFRVPLQKLHPLSRAIHHRYSANNNPQRPPHCSAARHYTSLSRLPMRPPKSRSGGHGYQQHRTFWVARLAARLLKLRYILLGSAVGGGYTAKKTYDEWKEMLPDMSEYTWIVPDFVWELSENIDLDKLASALPELEEIAKLLPDMEKIGENFTFLKSLLSSETTGESALRAPDVPPASAAMADSGDKQFKKSSDKEKVDQLQEELLRTQLKYQRMLERLEKENKELRKVVLQKDDKGIHQRKVKKSLIDMYSEVLDILSDYDSNYNTQDHLPRVVVVGDQSAGKTSVLEMIAQARIFPRGSGEMMTRSPVKVTLSEGPHHVAMFKDSSREFDLGKEEDLAALRHEIELRMRKSVKEGQTVSPETISLSVKGPGIQRMVLVDLPGVISTVTTGMAADTKETIFSISKAYMQNPNAIILCIQDGSVDAERSIVTDLVSQMDPQGKRTIFVLTKVDLAEKNLASPSRIQQIVEGKLFPMKALGYFAVVTGKGSPNESIDSIKDYEEDFFQNSRLLKDGMLKAHQVTTKNLSLAVSDCFWKMVRESVEQQADAFKASRFNLETEWKNNYPRLRELDRNELYEKAKNEILDEVISLSQVTPKHWESILQKKLWERVSTHVIENIYLPAAQTMNSGTFNTTVDIKLKQWTDKQLPHKALEVAWETLQEEFARFMAEYKGKDQDDIFDKLKEAVKDESIKRHKWNERAMDSLRVIQHNALEDRSITDKPQWDAAIQFMEETLQSRLKDTESVIADMVGPDWKQRWMSWKNRTPEQHTRNETKNELERLLKLHEDHTAYLANDEVTTVRKNLEARGVEVDPVLIKDTWHQLFRRHFLQKALLHCNLCRRGFYYYQRHFVDSELECNDVVLFWRIQRMLGITANTLRQQLTNTEVRRLEKNVKEVLEDFGEDNEKKVQLITGRRVQLAEDLKKVREIQEKLEAFIEALHKEK</sequence>
<protein>
    <recommendedName>
        <fullName>Dynamin-like GTPase OPA1, mitochondrial</fullName>
        <ecNumber evidence="2">3.6.5.5</ecNumber>
    </recommendedName>
    <alternativeName>
        <fullName>Optic atrophy protein 1 homolog</fullName>
    </alternativeName>
    <component>
        <recommendedName>
            <fullName evidence="9">Dynamin-like GTPase OPA1, long form</fullName>
            <shortName evidence="2">L-OPA1</shortName>
        </recommendedName>
    </component>
    <component>
        <recommendedName>
            <fullName evidence="9">Dynamin-like GTPase OPA1, short form</fullName>
            <shortName evidence="2">S-OPA1</shortName>
        </recommendedName>
    </component>
</protein>
<dbReference type="EC" id="3.6.5.5" evidence="2"/>
<dbReference type="EMBL" id="BC085633">
    <property type="protein sequence ID" value="AAH85633.1"/>
    <property type="molecule type" value="mRNA"/>
</dbReference>
<dbReference type="RefSeq" id="NP_001007299.1">
    <property type="nucleotide sequence ID" value="NM_001007298.1"/>
</dbReference>
<dbReference type="SMR" id="Q5U3A7"/>
<dbReference type="FunCoup" id="Q5U3A7">
    <property type="interactions" value="2705"/>
</dbReference>
<dbReference type="STRING" id="7955.ENSDARP00000095031"/>
<dbReference type="PaxDb" id="7955-ENSDARP00000065102"/>
<dbReference type="Ensembl" id="ENSDART00000104256">
    <property type="protein sequence ID" value="ENSDARP00000095031"/>
    <property type="gene ID" value="ENSDARG00000070801"/>
</dbReference>
<dbReference type="GeneID" id="492332"/>
<dbReference type="KEGG" id="dre:492332"/>
<dbReference type="AGR" id="ZFIN:ZDB-GENE-041114-7"/>
<dbReference type="CTD" id="4976"/>
<dbReference type="ZFIN" id="ZDB-GENE-041114-7">
    <property type="gene designation" value="opa1"/>
</dbReference>
<dbReference type="eggNOG" id="KOG0447">
    <property type="taxonomic scope" value="Eukaryota"/>
</dbReference>
<dbReference type="HOGENOM" id="CLU_012302_0_0_1"/>
<dbReference type="InParanoid" id="Q5U3A7"/>
<dbReference type="OrthoDB" id="415706at2759"/>
<dbReference type="PhylomeDB" id="Q5U3A7"/>
<dbReference type="TreeFam" id="TF314250"/>
<dbReference type="Reactome" id="R-DRE-169911">
    <property type="pathway name" value="Regulation of Apoptosis"/>
</dbReference>
<dbReference type="PRO" id="PR:Q5U3A7"/>
<dbReference type="Proteomes" id="UP000000437">
    <property type="component" value="Chromosome 6"/>
</dbReference>
<dbReference type="Bgee" id="ENSDARG00000070801">
    <property type="expression patterns" value="Expressed in muscle tissue and 28 other cell types or tissues"/>
</dbReference>
<dbReference type="ExpressionAtlas" id="Q5U3A7">
    <property type="expression patterns" value="baseline and differential"/>
</dbReference>
<dbReference type="GO" id="GO:0005737">
    <property type="term" value="C:cytoplasm"/>
    <property type="evidence" value="ECO:0000318"/>
    <property type="project" value="GO_Central"/>
</dbReference>
<dbReference type="GO" id="GO:0005874">
    <property type="term" value="C:microtubule"/>
    <property type="evidence" value="ECO:0000318"/>
    <property type="project" value="GO_Central"/>
</dbReference>
<dbReference type="GO" id="GO:0005743">
    <property type="term" value="C:mitochondrial inner membrane"/>
    <property type="evidence" value="ECO:0007669"/>
    <property type="project" value="UniProtKB-SubCell"/>
</dbReference>
<dbReference type="GO" id="GO:0005758">
    <property type="term" value="C:mitochondrial intermembrane space"/>
    <property type="evidence" value="ECO:0000318"/>
    <property type="project" value="GO_Central"/>
</dbReference>
<dbReference type="GO" id="GO:0031966">
    <property type="term" value="C:mitochondrial membrane"/>
    <property type="evidence" value="ECO:0000318"/>
    <property type="project" value="GO_Central"/>
</dbReference>
<dbReference type="GO" id="GO:1901612">
    <property type="term" value="F:cardiolipin binding"/>
    <property type="evidence" value="ECO:0000250"/>
    <property type="project" value="UniProtKB"/>
</dbReference>
<dbReference type="GO" id="GO:0005525">
    <property type="term" value="F:GTP binding"/>
    <property type="evidence" value="ECO:0007669"/>
    <property type="project" value="UniProtKB-KW"/>
</dbReference>
<dbReference type="GO" id="GO:0003924">
    <property type="term" value="F:GTPase activity"/>
    <property type="evidence" value="ECO:0000250"/>
    <property type="project" value="UniProtKB"/>
</dbReference>
<dbReference type="GO" id="GO:0140523">
    <property type="term" value="F:GTPase-dependent fusogenic activity"/>
    <property type="evidence" value="ECO:0000250"/>
    <property type="project" value="UniProtKB"/>
</dbReference>
<dbReference type="GO" id="GO:0180020">
    <property type="term" value="F:membrane bending activity"/>
    <property type="evidence" value="ECO:0000250"/>
    <property type="project" value="UniProtKB"/>
</dbReference>
<dbReference type="GO" id="GO:0046872">
    <property type="term" value="F:metal ion binding"/>
    <property type="evidence" value="ECO:0007669"/>
    <property type="project" value="UniProtKB-KW"/>
</dbReference>
<dbReference type="GO" id="GO:0008017">
    <property type="term" value="F:microtubule binding"/>
    <property type="evidence" value="ECO:0000318"/>
    <property type="project" value="GO_Central"/>
</dbReference>
<dbReference type="GO" id="GO:0070300">
    <property type="term" value="F:phosphatidic acid binding"/>
    <property type="evidence" value="ECO:0000250"/>
    <property type="project" value="UniProtKB"/>
</dbReference>
<dbReference type="GO" id="GO:0006915">
    <property type="term" value="P:apoptotic process"/>
    <property type="evidence" value="ECO:0007669"/>
    <property type="project" value="UniProtKB-KW"/>
</dbReference>
<dbReference type="GO" id="GO:0043009">
    <property type="term" value="P:chordate embryonic development"/>
    <property type="evidence" value="ECO:0000315"/>
    <property type="project" value="ZFIN"/>
</dbReference>
<dbReference type="GO" id="GO:0006897">
    <property type="term" value="P:endocytosis"/>
    <property type="evidence" value="ECO:0000318"/>
    <property type="project" value="GO_Central"/>
</dbReference>
<dbReference type="GO" id="GO:0046039">
    <property type="term" value="P:GTP metabolic process"/>
    <property type="evidence" value="ECO:0000250"/>
    <property type="project" value="UniProtKB"/>
</dbReference>
<dbReference type="GO" id="GO:0048312">
    <property type="term" value="P:intracellular distribution of mitochondria"/>
    <property type="evidence" value="ECO:0000318"/>
    <property type="project" value="GO_Central"/>
</dbReference>
<dbReference type="GO" id="GO:0097749">
    <property type="term" value="P:membrane tubulation"/>
    <property type="evidence" value="ECO:0000250"/>
    <property type="project" value="UniProtKB"/>
</dbReference>
<dbReference type="GO" id="GO:0000266">
    <property type="term" value="P:mitochondrial fission"/>
    <property type="evidence" value="ECO:0000318"/>
    <property type="project" value="GO_Central"/>
</dbReference>
<dbReference type="GO" id="GO:0008053">
    <property type="term" value="P:mitochondrial fusion"/>
    <property type="evidence" value="ECO:0000250"/>
    <property type="project" value="UniProtKB"/>
</dbReference>
<dbReference type="GO" id="GO:1990627">
    <property type="term" value="P:mitochondrial inner membrane fusion"/>
    <property type="evidence" value="ECO:0000250"/>
    <property type="project" value="UniProtKB"/>
</dbReference>
<dbReference type="GO" id="GO:0007005">
    <property type="term" value="P:mitochondrion organization"/>
    <property type="evidence" value="ECO:0000315"/>
    <property type="project" value="ZFIN"/>
</dbReference>
<dbReference type="GO" id="GO:0016559">
    <property type="term" value="P:peroxisome fission"/>
    <property type="evidence" value="ECO:0000318"/>
    <property type="project" value="GO_Central"/>
</dbReference>
<dbReference type="GO" id="GO:0032740">
    <property type="term" value="P:positive regulation of interleukin-17 production"/>
    <property type="evidence" value="ECO:0000250"/>
    <property type="project" value="UniProtKB"/>
</dbReference>
<dbReference type="GO" id="GO:2000330">
    <property type="term" value="P:positive regulation of T-helper 17 cell lineage commitment"/>
    <property type="evidence" value="ECO:0000250"/>
    <property type="project" value="UniProtKB"/>
</dbReference>
<dbReference type="GO" id="GO:0055015">
    <property type="term" value="P:ventricular cardiac muscle cell development"/>
    <property type="evidence" value="ECO:0000315"/>
    <property type="project" value="ZFIN"/>
</dbReference>
<dbReference type="CDD" id="cd08771">
    <property type="entry name" value="DLP_1"/>
    <property type="match status" value="1"/>
</dbReference>
<dbReference type="FunFam" id="3.40.50.300:FF:000171">
    <property type="entry name" value="Dynamin-like 120 kDa protein, mitochondrial"/>
    <property type="match status" value="1"/>
</dbReference>
<dbReference type="Gene3D" id="3.40.50.300">
    <property type="entry name" value="P-loop containing nucleotide triphosphate hydrolases"/>
    <property type="match status" value="1"/>
</dbReference>
<dbReference type="InterPro" id="IPR022812">
    <property type="entry name" value="Dynamin"/>
</dbReference>
<dbReference type="InterPro" id="IPR001401">
    <property type="entry name" value="Dynamin_GTPase"/>
</dbReference>
<dbReference type="InterPro" id="IPR045063">
    <property type="entry name" value="Dynamin_N"/>
</dbReference>
<dbReference type="InterPro" id="IPR030381">
    <property type="entry name" value="G_DYNAMIN_dom"/>
</dbReference>
<dbReference type="InterPro" id="IPR045817">
    <property type="entry name" value="OPA1_C"/>
</dbReference>
<dbReference type="InterPro" id="IPR027417">
    <property type="entry name" value="P-loop_NTPase"/>
</dbReference>
<dbReference type="PANTHER" id="PTHR11566">
    <property type="entry name" value="DYNAMIN"/>
    <property type="match status" value="1"/>
</dbReference>
<dbReference type="PANTHER" id="PTHR11566:SF67">
    <property type="entry name" value="DYNAMIN-LIKE 120 KDA PROTEIN, MITOCHONDRIAL"/>
    <property type="match status" value="1"/>
</dbReference>
<dbReference type="Pfam" id="PF00350">
    <property type="entry name" value="Dynamin_N"/>
    <property type="match status" value="1"/>
</dbReference>
<dbReference type="Pfam" id="PF19434">
    <property type="entry name" value="OPA1_C"/>
    <property type="match status" value="1"/>
</dbReference>
<dbReference type="PRINTS" id="PR00195">
    <property type="entry name" value="DYNAMIN"/>
</dbReference>
<dbReference type="SMART" id="SM00053">
    <property type="entry name" value="DYNc"/>
    <property type="match status" value="1"/>
</dbReference>
<dbReference type="SUPFAM" id="SSF52540">
    <property type="entry name" value="P-loop containing nucleoside triphosphate hydrolases"/>
    <property type="match status" value="1"/>
</dbReference>
<dbReference type="PROSITE" id="PS51718">
    <property type="entry name" value="G_DYNAMIN_2"/>
    <property type="match status" value="1"/>
</dbReference>
<gene>
    <name evidence="10" type="primary">opa1</name>
    <name type="ORF">zgc:92092</name>
</gene>
<accession>Q5U3A7</accession>
<organism>
    <name type="scientific">Danio rerio</name>
    <name type="common">Zebrafish</name>
    <name type="synonym">Brachydanio rerio</name>
    <dbReference type="NCBI Taxonomy" id="7955"/>
    <lineage>
        <taxon>Eukaryota</taxon>
        <taxon>Metazoa</taxon>
        <taxon>Chordata</taxon>
        <taxon>Craniata</taxon>
        <taxon>Vertebrata</taxon>
        <taxon>Euteleostomi</taxon>
        <taxon>Actinopterygii</taxon>
        <taxon>Neopterygii</taxon>
        <taxon>Teleostei</taxon>
        <taxon>Ostariophysi</taxon>
        <taxon>Cypriniformes</taxon>
        <taxon>Danionidae</taxon>
        <taxon>Danioninae</taxon>
        <taxon>Danio</taxon>
    </lineage>
</organism>